<organism>
    <name type="scientific">Mycolicibacterium gilvum (strain PYR-GCK)</name>
    <name type="common">Mycobacterium gilvum (strain PYR-GCK)</name>
    <dbReference type="NCBI Taxonomy" id="350054"/>
    <lineage>
        <taxon>Bacteria</taxon>
        <taxon>Bacillati</taxon>
        <taxon>Actinomycetota</taxon>
        <taxon>Actinomycetes</taxon>
        <taxon>Mycobacteriales</taxon>
        <taxon>Mycobacteriaceae</taxon>
        <taxon>Mycolicibacterium</taxon>
    </lineage>
</organism>
<reference key="1">
    <citation type="submission" date="2007-04" db="EMBL/GenBank/DDBJ databases">
        <title>Complete sequence of chromosome of Mycobacterium gilvum PYR-GCK.</title>
        <authorList>
            <consortium name="US DOE Joint Genome Institute"/>
            <person name="Copeland A."/>
            <person name="Lucas S."/>
            <person name="Lapidus A."/>
            <person name="Barry K."/>
            <person name="Detter J.C."/>
            <person name="Glavina del Rio T."/>
            <person name="Hammon N."/>
            <person name="Israni S."/>
            <person name="Dalin E."/>
            <person name="Tice H."/>
            <person name="Pitluck S."/>
            <person name="Chain P."/>
            <person name="Malfatti S."/>
            <person name="Shin M."/>
            <person name="Vergez L."/>
            <person name="Schmutz J."/>
            <person name="Larimer F."/>
            <person name="Land M."/>
            <person name="Hauser L."/>
            <person name="Kyrpides N."/>
            <person name="Mikhailova N."/>
            <person name="Miller C."/>
            <person name="Richardson P."/>
        </authorList>
    </citation>
    <scope>NUCLEOTIDE SEQUENCE [LARGE SCALE GENOMIC DNA]</scope>
    <source>
        <strain>PYR-GCK</strain>
    </source>
</reference>
<proteinExistence type="inferred from homology"/>
<sequence>MSEIPADLSYTEEHEWVQRTGDDTVRVGITDYAQAALGDVVFVQLPDVDAALTAGESFGEVESTKSVSDLYAPLTAKVVAVNGDLESNPQLVNSDPYGEGWLVELQADSASLDAALAELFDAEGYRGHVAD</sequence>
<keyword id="KW-0450">Lipoyl</keyword>
<feature type="chain" id="PRO_1000078734" description="Glycine cleavage system H protein">
    <location>
        <begin position="1"/>
        <end position="131"/>
    </location>
</feature>
<feature type="domain" description="Lipoyl-binding" evidence="2">
    <location>
        <begin position="24"/>
        <end position="106"/>
    </location>
</feature>
<feature type="modified residue" description="N6-lipoyllysine" evidence="1">
    <location>
        <position position="65"/>
    </location>
</feature>
<comment type="function">
    <text evidence="1">The glycine cleavage system catalyzes the degradation of glycine. The H protein shuttles the methylamine group of glycine from the P protein to the T protein.</text>
</comment>
<comment type="cofactor">
    <cofactor evidence="1">
        <name>(R)-lipoate</name>
        <dbReference type="ChEBI" id="CHEBI:83088"/>
    </cofactor>
    <text evidence="1">Binds 1 lipoyl cofactor covalently.</text>
</comment>
<comment type="subunit">
    <text evidence="1">The glycine cleavage system is composed of four proteins: P, T, L and H.</text>
</comment>
<comment type="similarity">
    <text evidence="1">Belongs to the GcvH family.</text>
</comment>
<protein>
    <recommendedName>
        <fullName evidence="1">Glycine cleavage system H protein</fullName>
    </recommendedName>
</protein>
<evidence type="ECO:0000255" key="1">
    <source>
        <dbReference type="HAMAP-Rule" id="MF_00272"/>
    </source>
</evidence>
<evidence type="ECO:0000255" key="2">
    <source>
        <dbReference type="PROSITE-ProRule" id="PRU01066"/>
    </source>
</evidence>
<gene>
    <name evidence="1" type="primary">gcvH</name>
    <name type="ordered locus">Mflv_3403</name>
</gene>
<name>GCSH_MYCGI</name>
<accession>A4TA86</accession>
<dbReference type="EMBL" id="CP000656">
    <property type="protein sequence ID" value="ABP45879.1"/>
    <property type="molecule type" value="Genomic_DNA"/>
</dbReference>
<dbReference type="SMR" id="A4TA86"/>
<dbReference type="STRING" id="350054.Mflv_3403"/>
<dbReference type="KEGG" id="mgi:Mflv_3403"/>
<dbReference type="eggNOG" id="COG0509">
    <property type="taxonomic scope" value="Bacteria"/>
</dbReference>
<dbReference type="HOGENOM" id="CLU_097408_2_2_11"/>
<dbReference type="OrthoDB" id="9796712at2"/>
<dbReference type="GO" id="GO:0005829">
    <property type="term" value="C:cytosol"/>
    <property type="evidence" value="ECO:0007669"/>
    <property type="project" value="TreeGrafter"/>
</dbReference>
<dbReference type="GO" id="GO:0005960">
    <property type="term" value="C:glycine cleavage complex"/>
    <property type="evidence" value="ECO:0007669"/>
    <property type="project" value="InterPro"/>
</dbReference>
<dbReference type="GO" id="GO:0019464">
    <property type="term" value="P:glycine decarboxylation via glycine cleavage system"/>
    <property type="evidence" value="ECO:0007669"/>
    <property type="project" value="UniProtKB-UniRule"/>
</dbReference>
<dbReference type="CDD" id="cd06848">
    <property type="entry name" value="GCS_H"/>
    <property type="match status" value="1"/>
</dbReference>
<dbReference type="Gene3D" id="2.40.50.100">
    <property type="match status" value="1"/>
</dbReference>
<dbReference type="HAMAP" id="MF_00272">
    <property type="entry name" value="GcvH"/>
    <property type="match status" value="1"/>
</dbReference>
<dbReference type="InterPro" id="IPR000089">
    <property type="entry name" value="Biotin_lipoyl"/>
</dbReference>
<dbReference type="InterPro" id="IPR002930">
    <property type="entry name" value="GCV_H"/>
</dbReference>
<dbReference type="InterPro" id="IPR033753">
    <property type="entry name" value="GCV_H/Fam206"/>
</dbReference>
<dbReference type="InterPro" id="IPR017453">
    <property type="entry name" value="GCV_H_sub"/>
</dbReference>
<dbReference type="InterPro" id="IPR011053">
    <property type="entry name" value="Single_hybrid_motif"/>
</dbReference>
<dbReference type="NCBIfam" id="TIGR00527">
    <property type="entry name" value="gcvH"/>
    <property type="match status" value="1"/>
</dbReference>
<dbReference type="NCBIfam" id="NF002270">
    <property type="entry name" value="PRK01202.1"/>
    <property type="match status" value="1"/>
</dbReference>
<dbReference type="PANTHER" id="PTHR11715">
    <property type="entry name" value="GLYCINE CLEAVAGE SYSTEM H PROTEIN"/>
    <property type="match status" value="1"/>
</dbReference>
<dbReference type="PANTHER" id="PTHR11715:SF3">
    <property type="entry name" value="GLYCINE CLEAVAGE SYSTEM H PROTEIN-RELATED"/>
    <property type="match status" value="1"/>
</dbReference>
<dbReference type="Pfam" id="PF01597">
    <property type="entry name" value="GCV_H"/>
    <property type="match status" value="1"/>
</dbReference>
<dbReference type="SUPFAM" id="SSF51230">
    <property type="entry name" value="Single hybrid motif"/>
    <property type="match status" value="1"/>
</dbReference>
<dbReference type="PROSITE" id="PS50968">
    <property type="entry name" value="BIOTINYL_LIPOYL"/>
    <property type="match status" value="1"/>
</dbReference>